<comment type="function">
    <text evidence="1">Single strand-specific metallo-endoribonuclease involved in late-stage 70S ribosome quality control and in maturation of the 3' terminus of the 16S rRNA.</text>
</comment>
<comment type="cofactor">
    <cofactor evidence="1">
        <name>Zn(2+)</name>
        <dbReference type="ChEBI" id="CHEBI:29105"/>
    </cofactor>
    <text evidence="1">Binds 1 zinc ion.</text>
</comment>
<comment type="subcellular location">
    <subcellularLocation>
        <location evidence="1">Cytoplasm</location>
    </subcellularLocation>
</comment>
<comment type="similarity">
    <text evidence="1">Belongs to the endoribonuclease YbeY family.</text>
</comment>
<keyword id="KW-0963">Cytoplasm</keyword>
<keyword id="KW-0255">Endonuclease</keyword>
<keyword id="KW-0378">Hydrolase</keyword>
<keyword id="KW-0479">Metal-binding</keyword>
<keyword id="KW-0540">Nuclease</keyword>
<keyword id="KW-0690">Ribosome biogenesis</keyword>
<keyword id="KW-0698">rRNA processing</keyword>
<keyword id="KW-0862">Zinc</keyword>
<protein>
    <recommendedName>
        <fullName evidence="1">Endoribonuclease YbeY</fullName>
        <ecNumber evidence="1">3.1.-.-</ecNumber>
    </recommendedName>
</protein>
<evidence type="ECO:0000255" key="1">
    <source>
        <dbReference type="HAMAP-Rule" id="MF_00009"/>
    </source>
</evidence>
<dbReference type="EC" id="3.1.-.-" evidence="1"/>
<dbReference type="EMBL" id="CP000891">
    <property type="protein sequence ID" value="ABX50603.1"/>
    <property type="molecule type" value="Genomic_DNA"/>
</dbReference>
<dbReference type="RefSeq" id="WP_012197522.1">
    <property type="nucleotide sequence ID" value="NC_009997.1"/>
</dbReference>
<dbReference type="SMR" id="A9KZZ5"/>
<dbReference type="GeneID" id="11773489"/>
<dbReference type="KEGG" id="sbn:Sbal195_3441"/>
<dbReference type="HOGENOM" id="CLU_106710_0_1_6"/>
<dbReference type="Proteomes" id="UP000000770">
    <property type="component" value="Chromosome"/>
</dbReference>
<dbReference type="GO" id="GO:0005737">
    <property type="term" value="C:cytoplasm"/>
    <property type="evidence" value="ECO:0007669"/>
    <property type="project" value="UniProtKB-SubCell"/>
</dbReference>
<dbReference type="GO" id="GO:0004222">
    <property type="term" value="F:metalloendopeptidase activity"/>
    <property type="evidence" value="ECO:0007669"/>
    <property type="project" value="InterPro"/>
</dbReference>
<dbReference type="GO" id="GO:0004521">
    <property type="term" value="F:RNA endonuclease activity"/>
    <property type="evidence" value="ECO:0007669"/>
    <property type="project" value="UniProtKB-UniRule"/>
</dbReference>
<dbReference type="GO" id="GO:0008270">
    <property type="term" value="F:zinc ion binding"/>
    <property type="evidence" value="ECO:0007669"/>
    <property type="project" value="UniProtKB-UniRule"/>
</dbReference>
<dbReference type="GO" id="GO:0006364">
    <property type="term" value="P:rRNA processing"/>
    <property type="evidence" value="ECO:0007669"/>
    <property type="project" value="UniProtKB-UniRule"/>
</dbReference>
<dbReference type="Gene3D" id="3.40.390.30">
    <property type="entry name" value="Metalloproteases ('zincins'), catalytic domain"/>
    <property type="match status" value="1"/>
</dbReference>
<dbReference type="HAMAP" id="MF_00009">
    <property type="entry name" value="Endoribonucl_YbeY"/>
    <property type="match status" value="1"/>
</dbReference>
<dbReference type="InterPro" id="IPR023091">
    <property type="entry name" value="MetalPrtase_cat_dom_sf_prd"/>
</dbReference>
<dbReference type="InterPro" id="IPR002036">
    <property type="entry name" value="YbeY"/>
</dbReference>
<dbReference type="InterPro" id="IPR020549">
    <property type="entry name" value="YbeY_CS"/>
</dbReference>
<dbReference type="NCBIfam" id="TIGR00043">
    <property type="entry name" value="rRNA maturation RNase YbeY"/>
    <property type="match status" value="1"/>
</dbReference>
<dbReference type="PANTHER" id="PTHR46986">
    <property type="entry name" value="ENDORIBONUCLEASE YBEY, CHLOROPLASTIC"/>
    <property type="match status" value="1"/>
</dbReference>
<dbReference type="PANTHER" id="PTHR46986:SF1">
    <property type="entry name" value="ENDORIBONUCLEASE YBEY, CHLOROPLASTIC"/>
    <property type="match status" value="1"/>
</dbReference>
<dbReference type="Pfam" id="PF02130">
    <property type="entry name" value="YbeY"/>
    <property type="match status" value="1"/>
</dbReference>
<dbReference type="SUPFAM" id="SSF55486">
    <property type="entry name" value="Metalloproteases ('zincins'), catalytic domain"/>
    <property type="match status" value="1"/>
</dbReference>
<dbReference type="PROSITE" id="PS01306">
    <property type="entry name" value="UPF0054"/>
    <property type="match status" value="1"/>
</dbReference>
<accession>A9KZZ5</accession>
<feature type="chain" id="PRO_1000073919" description="Endoribonuclease YbeY">
    <location>
        <begin position="1"/>
        <end position="153"/>
    </location>
</feature>
<feature type="binding site" evidence="1">
    <location>
        <position position="114"/>
    </location>
    <ligand>
        <name>Zn(2+)</name>
        <dbReference type="ChEBI" id="CHEBI:29105"/>
        <note>catalytic</note>
    </ligand>
</feature>
<feature type="binding site" evidence="1">
    <location>
        <position position="118"/>
    </location>
    <ligand>
        <name>Zn(2+)</name>
        <dbReference type="ChEBI" id="CHEBI:29105"/>
        <note>catalytic</note>
    </ligand>
</feature>
<feature type="binding site" evidence="1">
    <location>
        <position position="124"/>
    </location>
    <ligand>
        <name>Zn(2+)</name>
        <dbReference type="ChEBI" id="CHEBI:29105"/>
        <note>catalytic</note>
    </ligand>
</feature>
<name>YBEY_SHEB9</name>
<reference key="1">
    <citation type="submission" date="2007-11" db="EMBL/GenBank/DDBJ databases">
        <title>Complete sequence of chromosome of Shewanella baltica OS195.</title>
        <authorList>
            <consortium name="US DOE Joint Genome Institute"/>
            <person name="Copeland A."/>
            <person name="Lucas S."/>
            <person name="Lapidus A."/>
            <person name="Barry K."/>
            <person name="Glavina del Rio T."/>
            <person name="Dalin E."/>
            <person name="Tice H."/>
            <person name="Pitluck S."/>
            <person name="Chain P."/>
            <person name="Malfatti S."/>
            <person name="Shin M."/>
            <person name="Vergez L."/>
            <person name="Schmutz J."/>
            <person name="Larimer F."/>
            <person name="Land M."/>
            <person name="Hauser L."/>
            <person name="Kyrpides N."/>
            <person name="Kim E."/>
            <person name="Brettar I."/>
            <person name="Rodrigues J."/>
            <person name="Konstantinidis K."/>
            <person name="Klappenbach J."/>
            <person name="Hofle M."/>
            <person name="Tiedje J."/>
            <person name="Richardson P."/>
        </authorList>
    </citation>
    <scope>NUCLEOTIDE SEQUENCE [LARGE SCALE GENOMIC DNA]</scope>
    <source>
        <strain>OS195</strain>
    </source>
</reference>
<proteinExistence type="inferred from homology"/>
<sequence length="153" mass="17296">MSLDLALDIQHATTCDWLPTDEQFALWVTNAIGNSMNEAELTIRIVDSRESQMLNSTYRGKDKPTNVLSFPFEAPPEIELPLLGDLVICAAVVENEAREQQKTLEAHWAHMVVHGCLHLLGYDHIEDEEAEEMESLETQLIEGLGFTDPYKEQ</sequence>
<gene>
    <name evidence="1" type="primary">ybeY</name>
    <name type="ordered locus">Sbal195_3441</name>
</gene>
<organism>
    <name type="scientific">Shewanella baltica (strain OS195)</name>
    <dbReference type="NCBI Taxonomy" id="399599"/>
    <lineage>
        <taxon>Bacteria</taxon>
        <taxon>Pseudomonadati</taxon>
        <taxon>Pseudomonadota</taxon>
        <taxon>Gammaproteobacteria</taxon>
        <taxon>Alteromonadales</taxon>
        <taxon>Shewanellaceae</taxon>
        <taxon>Shewanella</taxon>
    </lineage>
</organism>